<name>PRIA_HELPY</name>
<reference key="1">
    <citation type="journal article" date="1997" name="Nature">
        <title>The complete genome sequence of the gastric pathogen Helicobacter pylori.</title>
        <authorList>
            <person name="Tomb J.-F."/>
            <person name="White O."/>
            <person name="Kerlavage A.R."/>
            <person name="Clayton R.A."/>
            <person name="Sutton G.G."/>
            <person name="Fleischmann R.D."/>
            <person name="Ketchum K.A."/>
            <person name="Klenk H.-P."/>
            <person name="Gill S.R."/>
            <person name="Dougherty B.A."/>
            <person name="Nelson K.E."/>
            <person name="Quackenbush J."/>
            <person name="Zhou L."/>
            <person name="Kirkness E.F."/>
            <person name="Peterson S.N."/>
            <person name="Loftus B.J."/>
            <person name="Richardson D.L."/>
            <person name="Dodson R.J."/>
            <person name="Khalak H.G."/>
            <person name="Glodek A."/>
            <person name="McKenney K."/>
            <person name="FitzGerald L.M."/>
            <person name="Lee N."/>
            <person name="Adams M.D."/>
            <person name="Hickey E.K."/>
            <person name="Berg D.E."/>
            <person name="Gocayne J.D."/>
            <person name="Utterback T.R."/>
            <person name="Peterson J.D."/>
            <person name="Kelley J.M."/>
            <person name="Cotton M.D."/>
            <person name="Weidman J.F."/>
            <person name="Fujii C."/>
            <person name="Bowman C."/>
            <person name="Watthey L."/>
            <person name="Wallin E."/>
            <person name="Hayes W.S."/>
            <person name="Borodovsky M."/>
            <person name="Karp P.D."/>
            <person name="Smith H.O."/>
            <person name="Fraser C.M."/>
            <person name="Venter J.C."/>
        </authorList>
    </citation>
    <scope>NUCLEOTIDE SEQUENCE [LARGE SCALE GENOMIC DNA]</scope>
    <source>
        <strain>ATCC 700392 / 26695</strain>
    </source>
</reference>
<reference key="2">
    <citation type="journal article" date="2016" name="Helicobacter">
        <title>Investigating the Role of Helicobacter pylori PriA Protein.</title>
        <authorList>
            <person name="Singh A."/>
            <person name="Blaskovic D."/>
            <person name="Joo J."/>
            <person name="Yang Z."/>
            <person name="Jackson S.H."/>
            <person name="Coleman W.G. Jr."/>
            <person name="Yan M."/>
        </authorList>
    </citation>
    <scope>FUNCTION IN VIRULENCE</scope>
    <scope>DISRUPTION PHENOTYPE</scope>
    <source>
        <strain>SS1</strain>
    </source>
</reference>
<gene>
    <name evidence="1" type="primary">priA</name>
    <name type="ordered locus">HP_0387</name>
</gene>
<accession>O25149</accession>
<comment type="function">
    <text evidence="1">Initiates the restart of stalled replication forks, which reloads the replicative helicase on sites other than the origin of replication. Recognizes and binds to abandoned replication forks and remodels them to uncover a helicase loading site. Promotes assembly of the primosome at these replication forks.</text>
</comment>
<comment type="function">
    <text evidence="2">Important for survival of the bacteria in host cells.</text>
</comment>
<comment type="catalytic activity">
    <reaction evidence="1">
        <text>Couples ATP hydrolysis with the unwinding of duplex DNA by translocating in the 3'-5' direction.</text>
        <dbReference type="EC" id="5.6.2.4"/>
    </reaction>
</comment>
<comment type="catalytic activity">
    <reaction evidence="1">
        <text>ATP + H2O = ADP + phosphate + H(+)</text>
        <dbReference type="Rhea" id="RHEA:13065"/>
        <dbReference type="ChEBI" id="CHEBI:15377"/>
        <dbReference type="ChEBI" id="CHEBI:15378"/>
        <dbReference type="ChEBI" id="CHEBI:30616"/>
        <dbReference type="ChEBI" id="CHEBI:43474"/>
        <dbReference type="ChEBI" id="CHEBI:456216"/>
        <dbReference type="EC" id="5.6.2.4"/>
    </reaction>
</comment>
<comment type="cofactor">
    <cofactor evidence="1">
        <name>Zn(2+)</name>
        <dbReference type="ChEBI" id="CHEBI:29105"/>
    </cofactor>
    <text evidence="1">Binds 2 zinc ions per subunit.</text>
</comment>
<comment type="subunit">
    <text evidence="1">Component of the replication restart primosome.</text>
</comment>
<comment type="disruption phenotype">
    <text evidence="2">No visible phenotype during growth in the lab. Unable to colonize the stomach of C57BL/6 mice after 4 and 8 weeks of infection. Bacteria are able to invade gastric epithelial or macrophage cells but do not survive as well as wild-type cells after 24 hours. Cells are more sensitive to DNA-damaging UV light and DNA gyrase inhibitor ciprofloxacin. Cells are very sensitive to H(2)O(2) and slightly more sensitive to growth at pH 4.0.</text>
</comment>
<comment type="similarity">
    <text evidence="1">Belongs to the helicase family. PriA subfamily.</text>
</comment>
<feature type="chain" id="PRO_0000102125" description="Replication restart protein PriA">
    <location>
        <begin position="1"/>
        <end position="619"/>
    </location>
</feature>
<feature type="domain" description="Helicase ATP-binding" evidence="1">
    <location>
        <begin position="119"/>
        <end position="285"/>
    </location>
</feature>
<feature type="domain" description="Helicase C-terminal" evidence="1">
    <location>
        <begin position="371"/>
        <end position="532"/>
    </location>
</feature>
<feature type="short sequence motif" description="DEAH box" evidence="1">
    <location>
        <begin position="228"/>
        <end position="231"/>
    </location>
</feature>
<feature type="binding site" evidence="1">
    <location>
        <begin position="132"/>
        <end position="139"/>
    </location>
    <ligand>
        <name>ATP</name>
        <dbReference type="ChEBI" id="CHEBI:30616"/>
    </ligand>
</feature>
<feature type="binding site" evidence="1">
    <location>
        <position position="336"/>
    </location>
    <ligand>
        <name>Zn(2+)</name>
        <dbReference type="ChEBI" id="CHEBI:29105"/>
        <label>1</label>
    </ligand>
</feature>
<feature type="binding site" evidence="1">
    <location>
        <position position="339"/>
    </location>
    <ligand>
        <name>Zn(2+)</name>
        <dbReference type="ChEBI" id="CHEBI:29105"/>
        <label>1</label>
    </ligand>
</feature>
<feature type="binding site" evidence="1">
    <location>
        <position position="345"/>
    </location>
    <ligand>
        <name>Zn(2+)</name>
        <dbReference type="ChEBI" id="CHEBI:29105"/>
        <label>2</label>
    </ligand>
</feature>
<feature type="binding site" evidence="1">
    <location>
        <position position="348"/>
    </location>
    <ligand>
        <name>Zn(2+)</name>
        <dbReference type="ChEBI" id="CHEBI:29105"/>
        <label>2</label>
    </ligand>
</feature>
<feature type="binding site" evidence="1">
    <location>
        <position position="363"/>
    </location>
    <ligand>
        <name>Zn(2+)</name>
        <dbReference type="ChEBI" id="CHEBI:29105"/>
        <label>2</label>
    </ligand>
</feature>
<feature type="binding site" evidence="1">
    <location>
        <position position="366"/>
    </location>
    <ligand>
        <name>Zn(2+)</name>
        <dbReference type="ChEBI" id="CHEBI:29105"/>
        <label>2</label>
    </ligand>
</feature>
<feature type="binding site" evidence="1">
    <location>
        <position position="376"/>
    </location>
    <ligand>
        <name>Zn(2+)</name>
        <dbReference type="ChEBI" id="CHEBI:29105"/>
        <label>1</label>
    </ligand>
</feature>
<feature type="binding site" evidence="1">
    <location>
        <position position="379"/>
    </location>
    <ligand>
        <name>Zn(2+)</name>
        <dbReference type="ChEBI" id="CHEBI:29105"/>
        <label>1</label>
    </ligand>
</feature>
<dbReference type="EC" id="5.6.2.4" evidence="1"/>
<dbReference type="EMBL" id="AE000511">
    <property type="protein sequence ID" value="AAD07452.1"/>
    <property type="molecule type" value="Genomic_DNA"/>
</dbReference>
<dbReference type="PIR" id="C64568">
    <property type="entry name" value="C64568"/>
</dbReference>
<dbReference type="RefSeq" id="NP_207185.1">
    <property type="nucleotide sequence ID" value="NC_000915.1"/>
</dbReference>
<dbReference type="RefSeq" id="WP_000499252.1">
    <property type="nucleotide sequence ID" value="NC_018939.1"/>
</dbReference>
<dbReference type="SMR" id="O25149"/>
<dbReference type="FunCoup" id="O25149">
    <property type="interactions" value="226"/>
</dbReference>
<dbReference type="STRING" id="85962.HP_0387"/>
<dbReference type="PaxDb" id="85962-C694_01965"/>
<dbReference type="EnsemblBacteria" id="AAD07452">
    <property type="protein sequence ID" value="AAD07452"/>
    <property type="gene ID" value="HP_0387"/>
</dbReference>
<dbReference type="KEGG" id="heo:C694_01965"/>
<dbReference type="KEGG" id="hpy:HP_0387"/>
<dbReference type="PATRIC" id="fig|85962.47.peg.411"/>
<dbReference type="eggNOG" id="COG1198">
    <property type="taxonomic scope" value="Bacteria"/>
</dbReference>
<dbReference type="InParanoid" id="O25149"/>
<dbReference type="OrthoDB" id="9759544at2"/>
<dbReference type="PhylomeDB" id="O25149"/>
<dbReference type="Proteomes" id="UP000000429">
    <property type="component" value="Chromosome"/>
</dbReference>
<dbReference type="GO" id="GO:1990077">
    <property type="term" value="C:primosome complex"/>
    <property type="evidence" value="ECO:0007669"/>
    <property type="project" value="UniProtKB-UniRule"/>
</dbReference>
<dbReference type="GO" id="GO:0043138">
    <property type="term" value="F:3'-5' DNA helicase activity"/>
    <property type="evidence" value="ECO:0000318"/>
    <property type="project" value="GO_Central"/>
</dbReference>
<dbReference type="GO" id="GO:0005524">
    <property type="term" value="F:ATP binding"/>
    <property type="evidence" value="ECO:0007669"/>
    <property type="project" value="UniProtKB-UniRule"/>
</dbReference>
<dbReference type="GO" id="GO:0016887">
    <property type="term" value="F:ATP hydrolysis activity"/>
    <property type="evidence" value="ECO:0007669"/>
    <property type="project" value="RHEA"/>
</dbReference>
<dbReference type="GO" id="GO:0003677">
    <property type="term" value="F:DNA binding"/>
    <property type="evidence" value="ECO:0007669"/>
    <property type="project" value="UniProtKB-UniRule"/>
</dbReference>
<dbReference type="GO" id="GO:0008270">
    <property type="term" value="F:zinc ion binding"/>
    <property type="evidence" value="ECO:0007669"/>
    <property type="project" value="UniProtKB-UniRule"/>
</dbReference>
<dbReference type="GO" id="GO:0006310">
    <property type="term" value="P:DNA recombination"/>
    <property type="evidence" value="ECO:0000318"/>
    <property type="project" value="GO_Central"/>
</dbReference>
<dbReference type="GO" id="GO:0006260">
    <property type="term" value="P:DNA replication"/>
    <property type="evidence" value="ECO:0000318"/>
    <property type="project" value="GO_Central"/>
</dbReference>
<dbReference type="GO" id="GO:0006270">
    <property type="term" value="P:DNA replication initiation"/>
    <property type="evidence" value="ECO:0000318"/>
    <property type="project" value="GO_Central"/>
</dbReference>
<dbReference type="GO" id="GO:0006269">
    <property type="term" value="P:DNA replication, synthesis of primer"/>
    <property type="evidence" value="ECO:0007669"/>
    <property type="project" value="UniProtKB-KW"/>
</dbReference>
<dbReference type="GO" id="GO:0006302">
    <property type="term" value="P:double-strand break repair"/>
    <property type="evidence" value="ECO:0000318"/>
    <property type="project" value="GO_Central"/>
</dbReference>
<dbReference type="FunFam" id="3.40.50.300:FF:000489">
    <property type="entry name" value="Primosome assembly protein PriA"/>
    <property type="match status" value="1"/>
</dbReference>
<dbReference type="Gene3D" id="3.40.50.300">
    <property type="entry name" value="P-loop containing nucleotide triphosphate hydrolases"/>
    <property type="match status" value="2"/>
</dbReference>
<dbReference type="Gene3D" id="3.40.1440.60">
    <property type="entry name" value="PriA, 3(prime) DNA-binding domain"/>
    <property type="match status" value="1"/>
</dbReference>
<dbReference type="HAMAP" id="MF_00983">
    <property type="entry name" value="PriA"/>
    <property type="match status" value="1"/>
</dbReference>
<dbReference type="InterPro" id="IPR011545">
    <property type="entry name" value="DEAD/DEAH_box_helicase_dom"/>
</dbReference>
<dbReference type="InterPro" id="IPR014001">
    <property type="entry name" value="Helicase_ATP-bd"/>
</dbReference>
<dbReference type="InterPro" id="IPR001650">
    <property type="entry name" value="Helicase_C-like"/>
</dbReference>
<dbReference type="InterPro" id="IPR027417">
    <property type="entry name" value="P-loop_NTPase"/>
</dbReference>
<dbReference type="InterPro" id="IPR005259">
    <property type="entry name" value="PriA"/>
</dbReference>
<dbReference type="InterPro" id="IPR041222">
    <property type="entry name" value="PriA_3primeBD"/>
</dbReference>
<dbReference type="InterPro" id="IPR042115">
    <property type="entry name" value="PriA_3primeBD_sf"/>
</dbReference>
<dbReference type="InterPro" id="IPR041236">
    <property type="entry name" value="PriA_C"/>
</dbReference>
<dbReference type="InterPro" id="IPR040498">
    <property type="entry name" value="PriA_CRR"/>
</dbReference>
<dbReference type="InterPro" id="IPR050880">
    <property type="entry name" value="PriA_helicase"/>
</dbReference>
<dbReference type="NCBIfam" id="TIGR00595">
    <property type="entry name" value="priA"/>
    <property type="match status" value="1"/>
</dbReference>
<dbReference type="NCBIfam" id="NF004069">
    <property type="entry name" value="PRK05580.2-1"/>
    <property type="match status" value="1"/>
</dbReference>
<dbReference type="PANTHER" id="PTHR30580">
    <property type="entry name" value="PRIMOSOMAL PROTEIN N"/>
    <property type="match status" value="1"/>
</dbReference>
<dbReference type="PANTHER" id="PTHR30580:SF0">
    <property type="entry name" value="PRIMOSOMAL PROTEIN N"/>
    <property type="match status" value="1"/>
</dbReference>
<dbReference type="Pfam" id="PF00270">
    <property type="entry name" value="DEAD"/>
    <property type="match status" value="1"/>
</dbReference>
<dbReference type="Pfam" id="PF00271">
    <property type="entry name" value="Helicase_C"/>
    <property type="match status" value="1"/>
</dbReference>
<dbReference type="Pfam" id="PF17764">
    <property type="entry name" value="PriA_3primeBD"/>
    <property type="match status" value="1"/>
</dbReference>
<dbReference type="Pfam" id="PF18074">
    <property type="entry name" value="PriA_C"/>
    <property type="match status" value="1"/>
</dbReference>
<dbReference type="Pfam" id="PF18319">
    <property type="entry name" value="Zn_ribbon_PriA"/>
    <property type="match status" value="1"/>
</dbReference>
<dbReference type="SMART" id="SM00487">
    <property type="entry name" value="DEXDc"/>
    <property type="match status" value="1"/>
</dbReference>
<dbReference type="SMART" id="SM00490">
    <property type="entry name" value="HELICc"/>
    <property type="match status" value="1"/>
</dbReference>
<dbReference type="SUPFAM" id="SSF52540">
    <property type="entry name" value="P-loop containing nucleoside triphosphate hydrolases"/>
    <property type="match status" value="1"/>
</dbReference>
<dbReference type="PROSITE" id="PS51192">
    <property type="entry name" value="HELICASE_ATP_BIND_1"/>
    <property type="match status" value="1"/>
</dbReference>
<dbReference type="PROSITE" id="PS51194">
    <property type="entry name" value="HELICASE_CTER"/>
    <property type="match status" value="1"/>
</dbReference>
<protein>
    <recommendedName>
        <fullName evidence="1">Replication restart protein PriA</fullName>
    </recommendedName>
    <alternativeName>
        <fullName evidence="1">ATP-dependent DNA helicase PriA</fullName>
        <ecNumber evidence="1">5.6.2.4</ecNumber>
    </alternativeName>
    <alternativeName>
        <fullName evidence="1 3">DNA 3'-5' helicase PriA</fullName>
    </alternativeName>
</protein>
<sequence length="619" mass="70361">MFYHLIAPLKNKTPPLTYFSKEQHQKGALVNIPLRNKTLLGVVLEEVSKPSFECLELEKTPYFLLPFQMELAIFIAQYYSANLSSVLSLFAPFKECDLVGLEKIEPILNILSQTQTNALKELQKHSASLLFGDTGSGKTEIYMHAIAQTLEQKKSALLLVPEIALTPQMQQRLKRVFKENLGLWHSKLSQNQKKQFLEKLYSQEIKLVVGTRSALFLPLKELGLIIVDEEHDFSYKSHQSPMYNARDLCLYLSHKFPIQVILGSATPSLNSYKRFKDKALVRLKGRYTPTQKNIIFEKTERFITPKLLEALQQVLDKNEQAIIFVPTRANFKTLLCQSCYKSVQCPFCSVNMSLHLKTNKLMCHYCHFSSPIPKICSACQSEVLVGKRIGTMQVLKELESLLEGAKIAILDKDHTSTQKKLHNILNDFNAQKTNILIGTQMISKGHDYAKVSLAVVLGIDNIIKSNSYRALEEGVSLLYQIAGRSARQISGQVFIQSTETDLLENFLEDYEDFLQYELQERCELYPPFSRLCLLEFKHKNEEKAQQLSLKASQTLSSCLEKGVTLSNFKAPIEKIASSYRYLILLRSKNPLSLIKSVHAFLKSAPSIPCSVNMDPVDIF</sequence>
<keyword id="KW-0067">ATP-binding</keyword>
<keyword id="KW-0235">DNA replication</keyword>
<keyword id="KW-0238">DNA-binding</keyword>
<keyword id="KW-0347">Helicase</keyword>
<keyword id="KW-0378">Hydrolase</keyword>
<keyword id="KW-0413">Isomerase</keyword>
<keyword id="KW-0479">Metal-binding</keyword>
<keyword id="KW-0547">Nucleotide-binding</keyword>
<keyword id="KW-0639">Primosome</keyword>
<keyword id="KW-1185">Reference proteome</keyword>
<keyword id="KW-0843">Virulence</keyword>
<keyword id="KW-0862">Zinc</keyword>
<organism>
    <name type="scientific">Helicobacter pylori (strain ATCC 700392 / 26695)</name>
    <name type="common">Campylobacter pylori</name>
    <dbReference type="NCBI Taxonomy" id="85962"/>
    <lineage>
        <taxon>Bacteria</taxon>
        <taxon>Pseudomonadati</taxon>
        <taxon>Campylobacterota</taxon>
        <taxon>Epsilonproteobacteria</taxon>
        <taxon>Campylobacterales</taxon>
        <taxon>Helicobacteraceae</taxon>
        <taxon>Helicobacter</taxon>
    </lineage>
</organism>
<evidence type="ECO:0000255" key="1">
    <source>
        <dbReference type="HAMAP-Rule" id="MF_00983"/>
    </source>
</evidence>
<evidence type="ECO:0000269" key="2">
    <source>
    </source>
</evidence>
<evidence type="ECO:0000305" key="3"/>
<proteinExistence type="evidence at protein level"/>